<reference key="1">
    <citation type="journal article" date="2006" name="PLoS Genet.">
        <title>The complete genome sequence and comparative genome analysis of the high pathogenicity Yersinia enterocolitica strain 8081.</title>
        <authorList>
            <person name="Thomson N.R."/>
            <person name="Howard S."/>
            <person name="Wren B.W."/>
            <person name="Holden M.T.G."/>
            <person name="Crossman L."/>
            <person name="Challis G.L."/>
            <person name="Churcher C."/>
            <person name="Mungall K."/>
            <person name="Brooks K."/>
            <person name="Chillingworth T."/>
            <person name="Feltwell T."/>
            <person name="Abdellah Z."/>
            <person name="Hauser H."/>
            <person name="Jagels K."/>
            <person name="Maddison M."/>
            <person name="Moule S."/>
            <person name="Sanders M."/>
            <person name="Whitehead S."/>
            <person name="Quail M.A."/>
            <person name="Dougan G."/>
            <person name="Parkhill J."/>
            <person name="Prentice M.B."/>
        </authorList>
    </citation>
    <scope>NUCLEOTIDE SEQUENCE [LARGE SCALE GENOMIC DNA]</scope>
    <source>
        <strain>NCTC 13174 / 8081</strain>
    </source>
</reference>
<name>EFTU2_YERE8</name>
<evidence type="ECO:0000250" key="1"/>
<evidence type="ECO:0000255" key="2">
    <source>
        <dbReference type="HAMAP-Rule" id="MF_00118"/>
    </source>
</evidence>
<organism>
    <name type="scientific">Yersinia enterocolitica serotype O:8 / biotype 1B (strain NCTC 13174 / 8081)</name>
    <dbReference type="NCBI Taxonomy" id="393305"/>
    <lineage>
        <taxon>Bacteria</taxon>
        <taxon>Pseudomonadati</taxon>
        <taxon>Pseudomonadota</taxon>
        <taxon>Gammaproteobacteria</taxon>
        <taxon>Enterobacterales</taxon>
        <taxon>Yersiniaceae</taxon>
        <taxon>Yersinia</taxon>
    </lineage>
</organism>
<keyword id="KW-0963">Cytoplasm</keyword>
<keyword id="KW-0251">Elongation factor</keyword>
<keyword id="KW-0342">GTP-binding</keyword>
<keyword id="KW-0378">Hydrolase</keyword>
<keyword id="KW-0460">Magnesium</keyword>
<keyword id="KW-0479">Metal-binding</keyword>
<keyword id="KW-0547">Nucleotide-binding</keyword>
<keyword id="KW-0648">Protein biosynthesis</keyword>
<feature type="chain" id="PRO_0000337583" description="Elongation factor Tu 2">
    <location>
        <begin position="1"/>
        <end position="394"/>
    </location>
</feature>
<feature type="domain" description="tr-type G">
    <location>
        <begin position="10"/>
        <end position="204"/>
    </location>
</feature>
<feature type="region of interest" description="G1" evidence="1">
    <location>
        <begin position="19"/>
        <end position="26"/>
    </location>
</feature>
<feature type="region of interest" description="G2" evidence="1">
    <location>
        <begin position="60"/>
        <end position="64"/>
    </location>
</feature>
<feature type="region of interest" description="G3" evidence="1">
    <location>
        <begin position="81"/>
        <end position="84"/>
    </location>
</feature>
<feature type="region of interest" description="G4" evidence="1">
    <location>
        <begin position="136"/>
        <end position="139"/>
    </location>
</feature>
<feature type="region of interest" description="G5" evidence="1">
    <location>
        <begin position="174"/>
        <end position="176"/>
    </location>
</feature>
<feature type="binding site" evidence="2">
    <location>
        <begin position="19"/>
        <end position="26"/>
    </location>
    <ligand>
        <name>GTP</name>
        <dbReference type="ChEBI" id="CHEBI:37565"/>
    </ligand>
</feature>
<feature type="binding site" evidence="2">
    <location>
        <position position="26"/>
    </location>
    <ligand>
        <name>Mg(2+)</name>
        <dbReference type="ChEBI" id="CHEBI:18420"/>
    </ligand>
</feature>
<feature type="binding site" evidence="2">
    <location>
        <begin position="81"/>
        <end position="85"/>
    </location>
    <ligand>
        <name>GTP</name>
        <dbReference type="ChEBI" id="CHEBI:37565"/>
    </ligand>
</feature>
<feature type="binding site" evidence="2">
    <location>
        <begin position="136"/>
        <end position="139"/>
    </location>
    <ligand>
        <name>GTP</name>
        <dbReference type="ChEBI" id="CHEBI:37565"/>
    </ligand>
</feature>
<proteinExistence type="inferred from homology"/>
<gene>
    <name evidence="2" type="primary">tuf2</name>
    <name type="synonym">tufA</name>
    <name type="synonym">tufB</name>
    <name type="ordered locus">YE3927</name>
</gene>
<protein>
    <recommendedName>
        <fullName evidence="2">Elongation factor Tu 2</fullName>
        <shortName evidence="2">EF-Tu 2</shortName>
        <ecNumber evidence="2">3.6.5.3</ecNumber>
    </recommendedName>
</protein>
<sequence length="394" mass="43223">MSKEKFERTKPHVNVGTIGHVDHGKTTLTAAITTVLAKTYGGSARAFDQIDNAPEEKARGITINTSHVEYDTPSRHYAHVDCPGHADYVKNMITGAAQMDGAILVVAATDGPMPQTREHILLGRQVGVPYMIVFMNKCDMVDDEELLELVEMEVRELLSAYDFPGDDIPVVKGSALKALEGVKEWEDKIIELAGYLDTYIPEPERAVDKPFLLPIEDVFSISGRGTVVTGRVERGIVKVGEEVEIVGIKDTVKSTCTGVEMFRKLLDEGRAGENVGVLLRGIKREDIERGQVLAKPGSIKPHTTFESEVYILSKDEGGRHTPFFKGYRPQFYFRTTDVTGTIELPEGVEMVMPGDNINMVVTLIHPIAMDDGLRFAIREGGRTVGAGVVAKVIA</sequence>
<comment type="function">
    <text evidence="2">GTP hydrolase that promotes the GTP-dependent binding of aminoacyl-tRNA to the A-site of ribosomes during protein biosynthesis.</text>
</comment>
<comment type="catalytic activity">
    <reaction evidence="2">
        <text>GTP + H2O = GDP + phosphate + H(+)</text>
        <dbReference type="Rhea" id="RHEA:19669"/>
        <dbReference type="ChEBI" id="CHEBI:15377"/>
        <dbReference type="ChEBI" id="CHEBI:15378"/>
        <dbReference type="ChEBI" id="CHEBI:37565"/>
        <dbReference type="ChEBI" id="CHEBI:43474"/>
        <dbReference type="ChEBI" id="CHEBI:58189"/>
        <dbReference type="EC" id="3.6.5.3"/>
    </reaction>
    <physiologicalReaction direction="left-to-right" evidence="2">
        <dbReference type="Rhea" id="RHEA:19670"/>
    </physiologicalReaction>
</comment>
<comment type="subunit">
    <text evidence="2">Monomer.</text>
</comment>
<comment type="subcellular location">
    <subcellularLocation>
        <location evidence="2">Cytoplasm</location>
    </subcellularLocation>
</comment>
<comment type="similarity">
    <text evidence="2">Belongs to the TRAFAC class translation factor GTPase superfamily. Classic translation factor GTPase family. EF-Tu/EF-1A subfamily.</text>
</comment>
<dbReference type="EC" id="3.6.5.3" evidence="2"/>
<dbReference type="EMBL" id="AM286415">
    <property type="protein sequence ID" value="CAL13946.1"/>
    <property type="molecule type" value="Genomic_DNA"/>
</dbReference>
<dbReference type="RefSeq" id="YP_001008072.1">
    <property type="nucleotide sequence ID" value="NC_008800.1"/>
</dbReference>
<dbReference type="SMR" id="A1JS52"/>
<dbReference type="KEGG" id="yen:YE3927"/>
<dbReference type="PATRIC" id="fig|393305.7.peg.4177"/>
<dbReference type="eggNOG" id="COG0050">
    <property type="taxonomic scope" value="Bacteria"/>
</dbReference>
<dbReference type="HOGENOM" id="CLU_007265_0_2_6"/>
<dbReference type="OrthoDB" id="9803139at2"/>
<dbReference type="Proteomes" id="UP000000642">
    <property type="component" value="Chromosome"/>
</dbReference>
<dbReference type="GO" id="GO:0005829">
    <property type="term" value="C:cytosol"/>
    <property type="evidence" value="ECO:0007669"/>
    <property type="project" value="TreeGrafter"/>
</dbReference>
<dbReference type="GO" id="GO:0005525">
    <property type="term" value="F:GTP binding"/>
    <property type="evidence" value="ECO:0007669"/>
    <property type="project" value="UniProtKB-UniRule"/>
</dbReference>
<dbReference type="GO" id="GO:0003924">
    <property type="term" value="F:GTPase activity"/>
    <property type="evidence" value="ECO:0007669"/>
    <property type="project" value="InterPro"/>
</dbReference>
<dbReference type="GO" id="GO:0097216">
    <property type="term" value="F:guanosine tetraphosphate binding"/>
    <property type="evidence" value="ECO:0007669"/>
    <property type="project" value="UniProtKB-ARBA"/>
</dbReference>
<dbReference type="GO" id="GO:0003746">
    <property type="term" value="F:translation elongation factor activity"/>
    <property type="evidence" value="ECO:0007669"/>
    <property type="project" value="UniProtKB-UniRule"/>
</dbReference>
<dbReference type="CDD" id="cd01884">
    <property type="entry name" value="EF_Tu"/>
    <property type="match status" value="1"/>
</dbReference>
<dbReference type="CDD" id="cd03697">
    <property type="entry name" value="EFTU_II"/>
    <property type="match status" value="1"/>
</dbReference>
<dbReference type="CDD" id="cd03707">
    <property type="entry name" value="EFTU_III"/>
    <property type="match status" value="1"/>
</dbReference>
<dbReference type="FunFam" id="2.40.30.10:FF:000001">
    <property type="entry name" value="Elongation factor Tu"/>
    <property type="match status" value="1"/>
</dbReference>
<dbReference type="FunFam" id="3.40.50.300:FF:000003">
    <property type="entry name" value="Elongation factor Tu"/>
    <property type="match status" value="1"/>
</dbReference>
<dbReference type="Gene3D" id="3.40.50.300">
    <property type="entry name" value="P-loop containing nucleotide triphosphate hydrolases"/>
    <property type="match status" value="1"/>
</dbReference>
<dbReference type="Gene3D" id="2.40.30.10">
    <property type="entry name" value="Translation factors"/>
    <property type="match status" value="2"/>
</dbReference>
<dbReference type="HAMAP" id="MF_00118_B">
    <property type="entry name" value="EF_Tu_B"/>
    <property type="match status" value="1"/>
</dbReference>
<dbReference type="InterPro" id="IPR041709">
    <property type="entry name" value="EF-Tu_GTP-bd"/>
</dbReference>
<dbReference type="InterPro" id="IPR050055">
    <property type="entry name" value="EF-Tu_GTPase"/>
</dbReference>
<dbReference type="InterPro" id="IPR004161">
    <property type="entry name" value="EFTu-like_2"/>
</dbReference>
<dbReference type="InterPro" id="IPR033720">
    <property type="entry name" value="EFTU_2"/>
</dbReference>
<dbReference type="InterPro" id="IPR031157">
    <property type="entry name" value="G_TR_CS"/>
</dbReference>
<dbReference type="InterPro" id="IPR027417">
    <property type="entry name" value="P-loop_NTPase"/>
</dbReference>
<dbReference type="InterPro" id="IPR005225">
    <property type="entry name" value="Small_GTP-bd"/>
</dbReference>
<dbReference type="InterPro" id="IPR000795">
    <property type="entry name" value="T_Tr_GTP-bd_dom"/>
</dbReference>
<dbReference type="InterPro" id="IPR009000">
    <property type="entry name" value="Transl_B-barrel_sf"/>
</dbReference>
<dbReference type="InterPro" id="IPR009001">
    <property type="entry name" value="Transl_elong_EF1A/Init_IF2_C"/>
</dbReference>
<dbReference type="InterPro" id="IPR004541">
    <property type="entry name" value="Transl_elong_EFTu/EF1A_bac/org"/>
</dbReference>
<dbReference type="InterPro" id="IPR004160">
    <property type="entry name" value="Transl_elong_EFTu/EF1A_C"/>
</dbReference>
<dbReference type="NCBIfam" id="TIGR00485">
    <property type="entry name" value="EF-Tu"/>
    <property type="match status" value="1"/>
</dbReference>
<dbReference type="NCBIfam" id="NF000766">
    <property type="entry name" value="PRK00049.1"/>
    <property type="match status" value="1"/>
</dbReference>
<dbReference type="NCBIfam" id="NF009372">
    <property type="entry name" value="PRK12735.1"/>
    <property type="match status" value="1"/>
</dbReference>
<dbReference type="NCBIfam" id="NF009373">
    <property type="entry name" value="PRK12736.1"/>
    <property type="match status" value="1"/>
</dbReference>
<dbReference type="NCBIfam" id="TIGR00231">
    <property type="entry name" value="small_GTP"/>
    <property type="match status" value="1"/>
</dbReference>
<dbReference type="PANTHER" id="PTHR43721:SF22">
    <property type="entry name" value="ELONGATION FACTOR TU, MITOCHONDRIAL"/>
    <property type="match status" value="1"/>
</dbReference>
<dbReference type="PANTHER" id="PTHR43721">
    <property type="entry name" value="ELONGATION FACTOR TU-RELATED"/>
    <property type="match status" value="1"/>
</dbReference>
<dbReference type="Pfam" id="PF00009">
    <property type="entry name" value="GTP_EFTU"/>
    <property type="match status" value="1"/>
</dbReference>
<dbReference type="Pfam" id="PF03144">
    <property type="entry name" value="GTP_EFTU_D2"/>
    <property type="match status" value="1"/>
</dbReference>
<dbReference type="Pfam" id="PF03143">
    <property type="entry name" value="GTP_EFTU_D3"/>
    <property type="match status" value="1"/>
</dbReference>
<dbReference type="PRINTS" id="PR00315">
    <property type="entry name" value="ELONGATNFCT"/>
</dbReference>
<dbReference type="SUPFAM" id="SSF50465">
    <property type="entry name" value="EF-Tu/eEF-1alpha/eIF2-gamma C-terminal domain"/>
    <property type="match status" value="1"/>
</dbReference>
<dbReference type="SUPFAM" id="SSF52540">
    <property type="entry name" value="P-loop containing nucleoside triphosphate hydrolases"/>
    <property type="match status" value="1"/>
</dbReference>
<dbReference type="SUPFAM" id="SSF50447">
    <property type="entry name" value="Translation proteins"/>
    <property type="match status" value="1"/>
</dbReference>
<dbReference type="PROSITE" id="PS00301">
    <property type="entry name" value="G_TR_1"/>
    <property type="match status" value="1"/>
</dbReference>
<dbReference type="PROSITE" id="PS51722">
    <property type="entry name" value="G_TR_2"/>
    <property type="match status" value="1"/>
</dbReference>
<accession>A1JS52</accession>